<protein>
    <recommendedName>
        <fullName>Actin-1</fullName>
        <ecNumber evidence="2">3.6.4.-</ecNumber>
    </recommendedName>
</protein>
<keyword id="KW-0007">Acetylation</keyword>
<keyword id="KW-0067">ATP-binding</keyword>
<keyword id="KW-0963">Cytoplasm</keyword>
<keyword id="KW-0206">Cytoskeleton</keyword>
<keyword id="KW-0378">Hydrolase</keyword>
<keyword id="KW-0547">Nucleotide-binding</keyword>
<keyword id="KW-0558">Oxidation</keyword>
<keyword id="KW-1185">Reference proteome</keyword>
<organism>
    <name type="scientific">Aedes aegypti</name>
    <name type="common">Yellowfever mosquito</name>
    <name type="synonym">Culex aegypti</name>
    <dbReference type="NCBI Taxonomy" id="7159"/>
    <lineage>
        <taxon>Eukaryota</taxon>
        <taxon>Metazoa</taxon>
        <taxon>Ecdysozoa</taxon>
        <taxon>Arthropoda</taxon>
        <taxon>Hexapoda</taxon>
        <taxon>Insecta</taxon>
        <taxon>Pterygota</taxon>
        <taxon>Neoptera</taxon>
        <taxon>Endopterygota</taxon>
        <taxon>Diptera</taxon>
        <taxon>Nematocera</taxon>
        <taxon>Culicoidea</taxon>
        <taxon>Culicidae</taxon>
        <taxon>Culicinae</taxon>
        <taxon>Aedini</taxon>
        <taxon>Aedes</taxon>
        <taxon>Stegomyia</taxon>
    </lineage>
</organism>
<comment type="function">
    <text>Actins are highly conserved proteins that are involved in various types of cell motility and are ubiquitously expressed in all eukaryotic cells.</text>
</comment>
<comment type="catalytic activity">
    <reaction evidence="2">
        <text>ATP + H2O = ADP + phosphate + H(+)</text>
        <dbReference type="Rhea" id="RHEA:13065"/>
        <dbReference type="ChEBI" id="CHEBI:15377"/>
        <dbReference type="ChEBI" id="CHEBI:15378"/>
        <dbReference type="ChEBI" id="CHEBI:30616"/>
        <dbReference type="ChEBI" id="CHEBI:43474"/>
        <dbReference type="ChEBI" id="CHEBI:456216"/>
    </reaction>
</comment>
<comment type="subcellular location">
    <subcellularLocation>
        <location>Cytoplasm</location>
        <location>Cytoskeleton</location>
    </subcellularLocation>
</comment>
<comment type="PTM">
    <text evidence="1">Oxidation of Met-45 to form methionine sulfoxide promotes actin filament depolymerization. Methionine sulfoxide is produced stereospecifically, but it is not known whether the (S)-S-oxide or the (R)-S-oxide is produced (By similarity).</text>
</comment>
<comment type="similarity">
    <text evidence="3">Belongs to the actin family.</text>
</comment>
<reference key="1">
    <citation type="journal article" date="1996" name="J. Med. Entomol.">
        <title>Muscle actin gene from Aedes aegypti (Diptera: Culicidae).</title>
        <authorList>
            <person name="Ibrahim M.S."/>
            <person name="Eisinger S.W."/>
            <person name="Scott A.L."/>
        </authorList>
    </citation>
    <scope>NUCLEOTIDE SEQUENCE [MRNA]</scope>
    <source>
        <strain>Liverpool / Blackeye</strain>
    </source>
</reference>
<reference key="2">
    <citation type="journal article" date="2007" name="Science">
        <title>Genome sequence of Aedes aegypti, a major arbovirus vector.</title>
        <authorList>
            <person name="Nene V."/>
            <person name="Wortman J.R."/>
            <person name="Lawson D."/>
            <person name="Haas B.J."/>
            <person name="Kodira C.D."/>
            <person name="Tu Z.J."/>
            <person name="Loftus B.J."/>
            <person name="Xi Z."/>
            <person name="Megy K."/>
            <person name="Grabherr M."/>
            <person name="Ren Q."/>
            <person name="Zdobnov E.M."/>
            <person name="Lobo N.F."/>
            <person name="Campbell K.S."/>
            <person name="Brown S.E."/>
            <person name="Bonaldo M.F."/>
            <person name="Zhu J."/>
            <person name="Sinkins S.P."/>
            <person name="Hogenkamp D.G."/>
            <person name="Amedeo P."/>
            <person name="Arensburger P."/>
            <person name="Atkinson P.W."/>
            <person name="Bidwell S.L."/>
            <person name="Biedler J."/>
            <person name="Birney E."/>
            <person name="Bruggner R.V."/>
            <person name="Costas J."/>
            <person name="Coy M.R."/>
            <person name="Crabtree J."/>
            <person name="Crawford M."/>
            <person name="DeBruyn B."/>
            <person name="DeCaprio D."/>
            <person name="Eiglmeier K."/>
            <person name="Eisenstadt E."/>
            <person name="El-Dorry H."/>
            <person name="Gelbart W.M."/>
            <person name="Gomes S.L."/>
            <person name="Hammond M."/>
            <person name="Hannick L.I."/>
            <person name="Hogan J.R."/>
            <person name="Holmes M.H."/>
            <person name="Jaffe D."/>
            <person name="Johnston S.J."/>
            <person name="Kennedy R.C."/>
            <person name="Koo H."/>
            <person name="Kravitz S."/>
            <person name="Kriventseva E.V."/>
            <person name="Kulp D."/>
            <person name="Labutti K."/>
            <person name="Lee E."/>
            <person name="Li S."/>
            <person name="Lovin D.D."/>
            <person name="Mao C."/>
            <person name="Mauceli E."/>
            <person name="Menck C.F."/>
            <person name="Miller J.R."/>
            <person name="Montgomery P."/>
            <person name="Mori A."/>
            <person name="Nascimento A.L."/>
            <person name="Naveira H.F."/>
            <person name="Nusbaum C."/>
            <person name="O'Leary S.B."/>
            <person name="Orvis J."/>
            <person name="Pertea M."/>
            <person name="Quesneville H."/>
            <person name="Reidenbach K.R."/>
            <person name="Rogers Y.-H.C."/>
            <person name="Roth C.W."/>
            <person name="Schneider J.R."/>
            <person name="Schatz M."/>
            <person name="Shumway M."/>
            <person name="Stanke M."/>
            <person name="Stinson E.O."/>
            <person name="Tubio J.M.C."/>
            <person name="Vanzee J.P."/>
            <person name="Verjovski-Almeida S."/>
            <person name="Werner D."/>
            <person name="White O.R."/>
            <person name="Wyder S."/>
            <person name="Zeng Q."/>
            <person name="Zhao Q."/>
            <person name="Zhao Y."/>
            <person name="Hill C.A."/>
            <person name="Raikhel A.S."/>
            <person name="Soares M.B."/>
            <person name="Knudson D.L."/>
            <person name="Lee N.H."/>
            <person name="Galagan J."/>
            <person name="Salzberg S.L."/>
            <person name="Paulsen I.T."/>
            <person name="Dimopoulos G."/>
            <person name="Collins F.H."/>
            <person name="Bruce B."/>
            <person name="Fraser-Liggett C.M."/>
            <person name="Severson D.W."/>
        </authorList>
    </citation>
    <scope>NUCLEOTIDE SEQUENCE [LARGE SCALE GENOMIC DNA]</scope>
    <source>
        <strain>LVPib12</strain>
    </source>
</reference>
<name>ACT1_AEDAE</name>
<evidence type="ECO:0000250" key="1"/>
<evidence type="ECO:0000250" key="2">
    <source>
        <dbReference type="UniProtKB" id="P68137"/>
    </source>
</evidence>
<evidence type="ECO:0000305" key="3"/>
<sequence>MCDEDAAALVVDNGSGMCKAGFAGDDAPRAVFPSIVGRPRHQGVMVGMGNKDSYVGDEAQSKRGILTLKYPIEHGIITNWDDMEKIWHHTFYNELRVAPEEHPVLLTEAPLNPKANREKMTQIMFETFNSPAMYVAIQAVLSLYASGRTTGIVLDSGDGVSHTVPIYEGYALPHAILRLDLAGRDLTDYLMKILTERGYSFTTTAEREIVRDIKEKLCYVALDFEQEMATAAASTSLEKSYELPDGQVITIGNERFRCPEALFQPSFLGMESCGIHETVYNSIMKCDVDIRKDLYANTVLSGGTTMYPGIADRMQKEITALAPSSIKIKIIAPPERKYSVWIGGSILASLSTFQAMWISKQEYDESGPAIVHRKCF</sequence>
<gene>
    <name type="primary">ACT-1</name>
    <name type="ORF">AAEL001928</name>
</gene>
<proteinExistence type="evidence at transcript level"/>
<accession>P49128</accession>
<accession>Q17JS1</accession>
<dbReference type="EC" id="3.6.4.-" evidence="2"/>
<dbReference type="EMBL" id="U20287">
    <property type="protein sequence ID" value="AAA62350.1"/>
    <property type="molecule type" value="mRNA"/>
</dbReference>
<dbReference type="EMBL" id="CH477231">
    <property type="protein sequence ID" value="EAT46902.1"/>
    <property type="molecule type" value="Genomic_DNA"/>
</dbReference>
<dbReference type="SMR" id="P49128"/>
<dbReference type="STRING" id="7159.P49128"/>
<dbReference type="PaxDb" id="7159-AAEL001928-PA"/>
<dbReference type="EnsemblMetazoa" id="AAEL001928-RA">
    <property type="protein sequence ID" value="AAEL001928-PA"/>
    <property type="gene ID" value="AAEL001928"/>
</dbReference>
<dbReference type="GeneID" id="5572986"/>
<dbReference type="KEGG" id="aag:5572986"/>
<dbReference type="VEuPathDB" id="VectorBase:AAEL001928"/>
<dbReference type="eggNOG" id="KOG0676">
    <property type="taxonomic scope" value="Eukaryota"/>
</dbReference>
<dbReference type="HOGENOM" id="CLU_027965_0_2_1"/>
<dbReference type="InParanoid" id="P49128"/>
<dbReference type="OMA" id="ERFCASE"/>
<dbReference type="OrthoDB" id="8169262at2759"/>
<dbReference type="PhylomeDB" id="P49128"/>
<dbReference type="Proteomes" id="UP000008820">
    <property type="component" value="Chromosome 3"/>
</dbReference>
<dbReference type="Proteomes" id="UP000682892">
    <property type="component" value="Unassembled WGS sequence"/>
</dbReference>
<dbReference type="GO" id="GO:0005737">
    <property type="term" value="C:cytoplasm"/>
    <property type="evidence" value="ECO:0007669"/>
    <property type="project" value="UniProtKB-KW"/>
</dbReference>
<dbReference type="GO" id="GO:0005856">
    <property type="term" value="C:cytoskeleton"/>
    <property type="evidence" value="ECO:0007669"/>
    <property type="project" value="UniProtKB-SubCell"/>
</dbReference>
<dbReference type="GO" id="GO:0005524">
    <property type="term" value="F:ATP binding"/>
    <property type="evidence" value="ECO:0007669"/>
    <property type="project" value="UniProtKB-KW"/>
</dbReference>
<dbReference type="GO" id="GO:0016787">
    <property type="term" value="F:hydrolase activity"/>
    <property type="evidence" value="ECO:0007669"/>
    <property type="project" value="UniProtKB-KW"/>
</dbReference>
<dbReference type="CDD" id="cd10224">
    <property type="entry name" value="ASKHA_NBD_actin"/>
    <property type="match status" value="1"/>
</dbReference>
<dbReference type="FunFam" id="3.30.420.40:FF:000131">
    <property type="entry name" value="Actin, alpha skeletal muscle"/>
    <property type="match status" value="1"/>
</dbReference>
<dbReference type="FunFam" id="3.30.420.40:FF:000291">
    <property type="entry name" value="Actin, alpha skeletal muscle"/>
    <property type="match status" value="1"/>
</dbReference>
<dbReference type="FunFam" id="3.90.640.10:FF:000047">
    <property type="entry name" value="Actin, alpha skeletal muscle"/>
    <property type="match status" value="1"/>
</dbReference>
<dbReference type="FunFam" id="3.30.420.40:FF:000058">
    <property type="entry name" value="Putative actin-related protein 5"/>
    <property type="match status" value="1"/>
</dbReference>
<dbReference type="Gene3D" id="3.30.420.40">
    <property type="match status" value="2"/>
</dbReference>
<dbReference type="Gene3D" id="3.90.640.10">
    <property type="entry name" value="Actin, Chain A, domain 4"/>
    <property type="match status" value="1"/>
</dbReference>
<dbReference type="InterPro" id="IPR004000">
    <property type="entry name" value="Actin"/>
</dbReference>
<dbReference type="InterPro" id="IPR020902">
    <property type="entry name" value="Actin/actin-like_CS"/>
</dbReference>
<dbReference type="InterPro" id="IPR004001">
    <property type="entry name" value="Actin_CS"/>
</dbReference>
<dbReference type="InterPro" id="IPR043129">
    <property type="entry name" value="ATPase_NBD"/>
</dbReference>
<dbReference type="PANTHER" id="PTHR11937">
    <property type="entry name" value="ACTIN"/>
    <property type="match status" value="1"/>
</dbReference>
<dbReference type="Pfam" id="PF00022">
    <property type="entry name" value="Actin"/>
    <property type="match status" value="1"/>
</dbReference>
<dbReference type="PRINTS" id="PR00190">
    <property type="entry name" value="ACTIN"/>
</dbReference>
<dbReference type="SMART" id="SM00268">
    <property type="entry name" value="ACTIN"/>
    <property type="match status" value="1"/>
</dbReference>
<dbReference type="SUPFAM" id="SSF53067">
    <property type="entry name" value="Actin-like ATPase domain"/>
    <property type="match status" value="2"/>
</dbReference>
<dbReference type="PROSITE" id="PS00406">
    <property type="entry name" value="ACTINS_1"/>
    <property type="match status" value="1"/>
</dbReference>
<dbReference type="PROSITE" id="PS00432">
    <property type="entry name" value="ACTINS_2"/>
    <property type="match status" value="1"/>
</dbReference>
<dbReference type="PROSITE" id="PS01132">
    <property type="entry name" value="ACTINS_ACT_LIKE"/>
    <property type="match status" value="1"/>
</dbReference>
<feature type="propeptide" id="PRO_0000000604" description="Removed in mature form" evidence="1">
    <location>
        <begin position="1"/>
        <end position="2"/>
    </location>
</feature>
<feature type="chain" id="PRO_0000000605" description="Actin-1">
    <location>
        <begin position="3"/>
        <end position="376"/>
    </location>
</feature>
<feature type="modified residue" description="N-acetylaspartate" evidence="1">
    <location>
        <position position="3"/>
    </location>
</feature>
<feature type="modified residue" description="Methionine sulfoxide" evidence="1">
    <location>
        <position position="45"/>
    </location>
</feature>
<feature type="modified residue" description="Methionine sulfoxide" evidence="1">
    <location>
        <position position="48"/>
    </location>
</feature>
<feature type="sequence conflict" description="In Ref. 1; AAA62350." evidence="3" ref="1">
    <original>EDAAAL</original>
    <variation>DDVRRS</variation>
    <location>
        <begin position="4"/>
        <end position="9"/>
    </location>
</feature>
<feature type="sequence conflict" description="In Ref. 1; AAA62350." evidence="3" ref="1">
    <original>A</original>
    <variation>V</variation>
    <location>
        <position position="27"/>
    </location>
</feature>
<feature type="sequence conflict" description="In Ref. 1; AAA62350." evidence="3" ref="1">
    <original>A</original>
    <variation>V</variation>
    <location>
        <position position="59"/>
    </location>
</feature>
<feature type="sequence conflict" description="In Ref. 1; AAA62350." evidence="3" ref="1">
    <original>I</original>
    <variation>N</variation>
    <location>
        <position position="72"/>
    </location>
</feature>
<feature type="sequence conflict" description="In Ref. 1; AAA62350." evidence="3" ref="1">
    <original>CPEALFQPSF</original>
    <variation>AQKLSSSHPS</variation>
    <location>
        <begin position="258"/>
        <end position="267"/>
    </location>
</feature>